<sequence>MASVSISCPSCSATDGVVRNGKSTAGHQRYLCSHCRKTWQLQFTYTASQPGTHQKIIDMAMNGVGCRATARIMGVGLNTILRHLKNSGRSR</sequence>
<keyword id="KW-0233">DNA recombination</keyword>
<keyword id="KW-0814">Transposable element</keyword>
<keyword id="KW-0815">Transposition</keyword>
<accession>P0CF13</accession>
<accession>P03827</accession>
<accession>P0ADH0</accession>
<accession>P0C650</accession>
<accession>Q2EER2</accession>
<accession>Q2MCF5</accession>
<accession>Q2MCH2</accession>
<accession>Q933I5</accession>
<gene>
    <name type="primary">insA8</name>
    <name type="ordered locus">JW2286</name>
</gene>
<protein>
    <recommendedName>
        <fullName>Insertion element IS1 8 protein InsA</fullName>
    </recommendedName>
</protein>
<comment type="function">
    <text>Absolutely required for transposition of IS1.</text>
</comment>
<comment type="similarity">
    <text evidence="1">Belongs to the IS1 elements InsA family.</text>
</comment>
<comment type="caution">
    <text evidence="1">There is no equivalent of this gene in strain K12 / MG1655.</text>
</comment>
<evidence type="ECO:0000305" key="1"/>
<proteinExistence type="inferred from homology"/>
<dbReference type="EMBL" id="AP009048">
    <property type="protein sequence ID" value="BAA16126.1"/>
    <property type="molecule type" value="Genomic_DNA"/>
</dbReference>
<dbReference type="SMR" id="P0CF13"/>
<dbReference type="KEGG" id="ecj:JW2286"/>
<dbReference type="KEGG" id="ecoc:C3026_00105"/>
<dbReference type="PATRIC" id="fig|83333.103.peg.319"/>
<dbReference type="HOGENOM" id="CLU_076276_6_3_6"/>
<dbReference type="OMA" id="HCKSEDL"/>
<dbReference type="PhylomeDB" id="P0CF13"/>
<dbReference type="GO" id="GO:0006313">
    <property type="term" value="P:DNA transposition"/>
    <property type="evidence" value="ECO:0007669"/>
    <property type="project" value="InterPro"/>
</dbReference>
<dbReference type="InterPro" id="IPR024431">
    <property type="entry name" value="InsA_HTH_dom"/>
</dbReference>
<dbReference type="InterPro" id="IPR003220">
    <property type="entry name" value="InsA_N_dom_Znf"/>
</dbReference>
<dbReference type="InterPro" id="IPR051252">
    <property type="entry name" value="IS1_transposase_InsA"/>
</dbReference>
<dbReference type="PANTHER" id="PTHR47923">
    <property type="entry name" value="INSERTION ELEMENT IS1 1 PROTEIN INSA-RELATED"/>
    <property type="match status" value="1"/>
</dbReference>
<dbReference type="PANTHER" id="PTHR47923:SF1">
    <property type="entry name" value="INSERTION ELEMENT IS1 1 PROTEIN INSA-RELATED"/>
    <property type="match status" value="1"/>
</dbReference>
<dbReference type="Pfam" id="PF12759">
    <property type="entry name" value="HTH_Tnp_IS1"/>
    <property type="match status" value="1"/>
</dbReference>
<dbReference type="Pfam" id="PF03811">
    <property type="entry name" value="Zn_ribbon_InsA"/>
    <property type="match status" value="1"/>
</dbReference>
<feature type="chain" id="PRO_0000393355" description="Insertion element IS1 8 protein InsA">
    <location>
        <begin position="1"/>
        <end position="91"/>
    </location>
</feature>
<organism>
    <name type="scientific">Escherichia coli (strain K12)</name>
    <dbReference type="NCBI Taxonomy" id="83333"/>
    <lineage>
        <taxon>Bacteria</taxon>
        <taxon>Pseudomonadati</taxon>
        <taxon>Pseudomonadota</taxon>
        <taxon>Gammaproteobacteria</taxon>
        <taxon>Enterobacterales</taxon>
        <taxon>Enterobacteriaceae</taxon>
        <taxon>Escherichia</taxon>
    </lineage>
</organism>
<name>INSA8_ECOLI</name>
<reference key="1">
    <citation type="journal article" date="1997" name="DNA Res.">
        <title>Construction of a contiguous 874-kb sequence of the Escherichia coli-K12 genome corresponding to 50.0-68.8 min on the linkage map and analysis of its sequence features.</title>
        <authorList>
            <person name="Yamamoto Y."/>
            <person name="Aiba H."/>
            <person name="Baba T."/>
            <person name="Hayashi K."/>
            <person name="Inada T."/>
            <person name="Isono K."/>
            <person name="Itoh T."/>
            <person name="Kimura S."/>
            <person name="Kitagawa M."/>
            <person name="Makino K."/>
            <person name="Miki T."/>
            <person name="Mitsuhashi N."/>
            <person name="Mizobuchi K."/>
            <person name="Mori H."/>
            <person name="Nakade S."/>
            <person name="Nakamura Y."/>
            <person name="Nashimoto H."/>
            <person name="Oshima T."/>
            <person name="Oyama S."/>
            <person name="Saito N."/>
            <person name="Sampei G."/>
            <person name="Satoh Y."/>
            <person name="Sivasundaram S."/>
            <person name="Tagami H."/>
            <person name="Takahashi H."/>
            <person name="Takeda J."/>
            <person name="Takemoto K."/>
            <person name="Uehara K."/>
            <person name="Wada C."/>
            <person name="Yamagata S."/>
            <person name="Horiuchi T."/>
        </authorList>
    </citation>
    <scope>NUCLEOTIDE SEQUENCE [LARGE SCALE GENOMIC DNA]</scope>
    <source>
        <strain>K12 / W3110 / ATCC 27325 / DSM 5911</strain>
    </source>
</reference>
<reference key="2">
    <citation type="journal article" date="2006" name="Mol. Syst. Biol.">
        <title>Highly accurate genome sequences of Escherichia coli K-12 strains MG1655 and W3110.</title>
        <authorList>
            <person name="Hayashi K."/>
            <person name="Morooka N."/>
            <person name="Yamamoto Y."/>
            <person name="Fujita K."/>
            <person name="Isono K."/>
            <person name="Choi S."/>
            <person name="Ohtsubo E."/>
            <person name="Baba T."/>
            <person name="Wanner B.L."/>
            <person name="Mori H."/>
            <person name="Horiuchi T."/>
        </authorList>
    </citation>
    <scope>NUCLEOTIDE SEQUENCE [LARGE SCALE GENOMIC DNA]</scope>
    <source>
        <strain>K12 / W3110 / ATCC 27325 / DSM 5911</strain>
    </source>
</reference>